<protein>
    <recommendedName>
        <fullName evidence="1">Arginine N-succinyltransferase</fullName>
        <shortName evidence="1">AST</shortName>
        <ecNumber evidence="1">2.3.1.109</ecNumber>
    </recommendedName>
    <alternativeName>
        <fullName evidence="1">AOST</fullName>
    </alternativeName>
</protein>
<comment type="function">
    <text evidence="1">Catalyzes the transfer of succinyl-CoA to arginine to produce N(2)-succinylarginine.</text>
</comment>
<comment type="catalytic activity">
    <reaction evidence="1">
        <text>succinyl-CoA + L-arginine = N(2)-succinyl-L-arginine + CoA + H(+)</text>
        <dbReference type="Rhea" id="RHEA:15185"/>
        <dbReference type="ChEBI" id="CHEBI:15378"/>
        <dbReference type="ChEBI" id="CHEBI:32682"/>
        <dbReference type="ChEBI" id="CHEBI:57287"/>
        <dbReference type="ChEBI" id="CHEBI:57292"/>
        <dbReference type="ChEBI" id="CHEBI:58241"/>
        <dbReference type="EC" id="2.3.1.109"/>
    </reaction>
</comment>
<comment type="pathway">
    <text evidence="1">Amino-acid degradation; L-arginine degradation via AST pathway; L-glutamate and succinate from L-arginine: step 1/5.</text>
</comment>
<comment type="similarity">
    <text evidence="1">Belongs to the arginine N-succinyltransferase family.</text>
</comment>
<accession>A1ABS8</accession>
<dbReference type="EC" id="2.3.1.109" evidence="1"/>
<dbReference type="EMBL" id="CP000468">
    <property type="protein sequence ID" value="ABJ01118.1"/>
    <property type="molecule type" value="Genomic_DNA"/>
</dbReference>
<dbReference type="RefSeq" id="WP_000989442.1">
    <property type="nucleotide sequence ID" value="NZ_CADILS010000002.1"/>
</dbReference>
<dbReference type="SMR" id="A1ABS8"/>
<dbReference type="KEGG" id="ecv:APECO1_816"/>
<dbReference type="HOGENOM" id="CLU_057655_0_0_6"/>
<dbReference type="UniPathway" id="UPA00185">
    <property type="reaction ID" value="UER00279"/>
</dbReference>
<dbReference type="Proteomes" id="UP000008216">
    <property type="component" value="Chromosome"/>
</dbReference>
<dbReference type="GO" id="GO:0008791">
    <property type="term" value="F:arginine N-succinyltransferase activity"/>
    <property type="evidence" value="ECO:0007669"/>
    <property type="project" value="UniProtKB-UniRule"/>
</dbReference>
<dbReference type="GO" id="GO:0019544">
    <property type="term" value="P:arginine catabolic process to glutamate"/>
    <property type="evidence" value="ECO:0007669"/>
    <property type="project" value="UniProtKB-UniRule"/>
</dbReference>
<dbReference type="GO" id="GO:0019545">
    <property type="term" value="P:arginine catabolic process to succinate"/>
    <property type="evidence" value="ECO:0007669"/>
    <property type="project" value="UniProtKB-UniRule"/>
</dbReference>
<dbReference type="Gene3D" id="2.40.40.20">
    <property type="match status" value="1"/>
</dbReference>
<dbReference type="HAMAP" id="MF_01171">
    <property type="entry name" value="AstA"/>
    <property type="match status" value="1"/>
</dbReference>
<dbReference type="InterPro" id="IPR016181">
    <property type="entry name" value="Acyl_CoA_acyltransferase"/>
</dbReference>
<dbReference type="InterPro" id="IPR007041">
    <property type="entry name" value="Arg_succinylTrfase_AstA/AruG"/>
</dbReference>
<dbReference type="InterPro" id="IPR017650">
    <property type="entry name" value="Arginine_N-succinylTrfase"/>
</dbReference>
<dbReference type="NCBIfam" id="TIGR03243">
    <property type="entry name" value="arg_catab_AOST"/>
    <property type="match status" value="1"/>
</dbReference>
<dbReference type="NCBIfam" id="TIGR03244">
    <property type="entry name" value="arg_catab_AstA"/>
    <property type="match status" value="1"/>
</dbReference>
<dbReference type="NCBIfam" id="NF007770">
    <property type="entry name" value="PRK10456.1"/>
    <property type="match status" value="1"/>
</dbReference>
<dbReference type="PANTHER" id="PTHR30420:SF1">
    <property type="entry name" value="ARGININE N-SUCCINYLTRANSFERASE"/>
    <property type="match status" value="1"/>
</dbReference>
<dbReference type="PANTHER" id="PTHR30420">
    <property type="entry name" value="N-SUCCINYLARGININE DIHYDROLASE"/>
    <property type="match status" value="1"/>
</dbReference>
<dbReference type="Pfam" id="PF04958">
    <property type="entry name" value="AstA"/>
    <property type="match status" value="1"/>
</dbReference>
<dbReference type="SUPFAM" id="SSF55729">
    <property type="entry name" value="Acyl-CoA N-acyltransferases (Nat)"/>
    <property type="match status" value="1"/>
</dbReference>
<proteinExistence type="inferred from homology"/>
<name>ASTA_ECOK1</name>
<evidence type="ECO:0000255" key="1">
    <source>
        <dbReference type="HAMAP-Rule" id="MF_01171"/>
    </source>
</evidence>
<organism>
    <name type="scientific">Escherichia coli O1:K1 / APEC</name>
    <dbReference type="NCBI Taxonomy" id="405955"/>
    <lineage>
        <taxon>Bacteria</taxon>
        <taxon>Pseudomonadati</taxon>
        <taxon>Pseudomonadota</taxon>
        <taxon>Gammaproteobacteria</taxon>
        <taxon>Enterobacterales</taxon>
        <taxon>Enterobacteriaceae</taxon>
        <taxon>Escherichia</taxon>
    </lineage>
</organism>
<reference key="1">
    <citation type="journal article" date="2007" name="J. Bacteriol.">
        <title>The genome sequence of avian pathogenic Escherichia coli strain O1:K1:H7 shares strong similarities with human extraintestinal pathogenic E. coli genomes.</title>
        <authorList>
            <person name="Johnson T.J."/>
            <person name="Kariyawasam S."/>
            <person name="Wannemuehler Y."/>
            <person name="Mangiamele P."/>
            <person name="Johnson S.J."/>
            <person name="Doetkott C."/>
            <person name="Skyberg J.A."/>
            <person name="Lynne A.M."/>
            <person name="Johnson J.R."/>
            <person name="Nolan L.K."/>
        </authorList>
    </citation>
    <scope>NUCLEOTIDE SEQUENCE [LARGE SCALE GENOMIC DNA]</scope>
</reference>
<sequence>MMVIRPVERSDVSALMQLASKTGGGLTSLPANEATLSVRIERAIKTWQGELPKSEQGYVFVLEDSETGTVAGICAIEVAVGLNDPWYNYRVGTLVHASKELNVYNALPTLFLSNDHTGSSELCTLFLDPKWRKEGNGYLLSKSRFMFMAAFRDKFNDKVVAEMRGVIDEHGYSPFWQSLGKRFFSMDFSRADFLCGTGQKAFIAELMPKHPIYTYFLSQEAQDVIGQVHPQTAPARAVLEKEGFRYRNYIDIFDGGPTLECDIDRVRAIRKSRLVEVAEGQPAQGDFPACLVANENYHHFRVVLVRTDPATERLILTAAQLDVLKCHAGDRVRLVRLCAEEKTA</sequence>
<feature type="chain" id="PRO_1000065708" description="Arginine N-succinyltransferase">
    <location>
        <begin position="1"/>
        <end position="344"/>
    </location>
</feature>
<feature type="active site" description="Proton donor" evidence="1">
    <location>
        <position position="229"/>
    </location>
</feature>
<feature type="binding site" evidence="1">
    <location>
        <position position="125"/>
    </location>
    <ligand>
        <name>succinyl-CoA</name>
        <dbReference type="ChEBI" id="CHEBI:57292"/>
    </ligand>
</feature>
<gene>
    <name evidence="1" type="primary">astA</name>
    <name type="ordered locus">Ecok1_16240</name>
    <name type="ORF">APECO1_816</name>
</gene>
<keyword id="KW-0012">Acyltransferase</keyword>
<keyword id="KW-0056">Arginine metabolism</keyword>
<keyword id="KW-1185">Reference proteome</keyword>
<keyword id="KW-0808">Transferase</keyword>